<sequence>MTSIAEKWQKEWEKAKIFEANPDRTRNKFFTTVAFPYPNSPFHLGHGRTYVTCDIYARYMRMKGYNVLFPMGFHYTGTPIIAMADDVAKGDKELIDIFKNIYEIPDNVISKLADPLFMANYFRDEIKKAMKEIGLSIDWRREFTTIDPEFSSFIVWQFNKLQEKGYIVRDTHPVGWCPVHHIPVGMHDTKGDMEPEIGEFVLIYFNSDLGILPAATLRPETVFGAIGIWVNPDVTYSIIELDGKKMIVSERAAFKLTFQFDNIKNLGSIKGSELTKYKAVNPITGKEIPIMAADFVDPNVATGIVMSVPAHAPFDYYYLKKNKQQDMQIVSVIQVEGQGDTLAKDLVEKTNPKNKDDLQKLTEQVYRIEYNKGKMKDVSSLVKPEFVNYFKSFIGLSVPEARQKVTEFLIEKGLGRKIYEIMNRPVYCRCGNEVVVKILKDQWFLDYGNPQWKALAKKLISNMKFIPPEIRKDFEFVTDWLQKRACARTRGLGTPLPWDKKWIIESLSDSTIYMAYYTISHKIRQYQLKPSQLTYDFWNYIMLGIGDIDKISSETGISKEIIREMRNEFLYWYPLDIRHSGKDLIPNHLSFFIFNHAAIFPEELWPKAIAVNGFVLYEGKKMSKSLRNIIPLRKALRIYSPDVVRIALTSTADMGSDVNFSDSYAKSVGEILRRYYEFIKELPKYDGEGSEFANNWLKAQVSSIVLSSTKNMDNIDFRSTINDILYSFDSYLREYIDMCKADGKEPNGKLLREVIETWIKLLAPFAPHFAEEIWHELGHTTFISLEKWPTAEESSEDLYYILIHEYHKRIIEDSQKIINYYYKGKPSIVKIYVAEQELMKVLREAVQILSNGGTLKQLMEKERPSDKKLANIIRKIYELAVELDDNMKKLILGYNINEREILELGTKYMSYKLGIPVEVYDVSKLDKSKYNKEALPLKPAIIVE</sequence>
<keyword id="KW-0030">Aminoacyl-tRNA synthetase</keyword>
<keyword id="KW-0067">ATP-binding</keyword>
<keyword id="KW-0963">Cytoplasm</keyword>
<keyword id="KW-0436">Ligase</keyword>
<keyword id="KW-0547">Nucleotide-binding</keyword>
<keyword id="KW-0648">Protein biosynthesis</keyword>
<keyword id="KW-1185">Reference proteome</keyword>
<comment type="catalytic activity">
    <reaction evidence="1">
        <text>tRNA(Leu) + L-leucine + ATP = L-leucyl-tRNA(Leu) + AMP + diphosphate</text>
        <dbReference type="Rhea" id="RHEA:11688"/>
        <dbReference type="Rhea" id="RHEA-COMP:9613"/>
        <dbReference type="Rhea" id="RHEA-COMP:9622"/>
        <dbReference type="ChEBI" id="CHEBI:30616"/>
        <dbReference type="ChEBI" id="CHEBI:33019"/>
        <dbReference type="ChEBI" id="CHEBI:57427"/>
        <dbReference type="ChEBI" id="CHEBI:78442"/>
        <dbReference type="ChEBI" id="CHEBI:78494"/>
        <dbReference type="ChEBI" id="CHEBI:456215"/>
        <dbReference type="EC" id="6.1.1.4"/>
    </reaction>
</comment>
<comment type="subcellular location">
    <subcellularLocation>
        <location evidence="1">Cytoplasm</location>
    </subcellularLocation>
</comment>
<comment type="similarity">
    <text evidence="1">Belongs to the class-I aminoacyl-tRNA synthetase family.</text>
</comment>
<comment type="sequence caution" evidence="2">
    <conflict type="erroneous initiation">
        <sequence resource="EMBL-CDS" id="BAK54586"/>
    </conflict>
    <text>Truncated N-terminus.</text>
</comment>
<feature type="chain" id="PRO_0000152147" description="Leucine--tRNA ligase 2">
    <location>
        <begin position="1"/>
        <end position="944"/>
    </location>
</feature>
<feature type="short sequence motif" description="'HIGH' region">
    <location>
        <begin position="36"/>
        <end position="46"/>
    </location>
</feature>
<feature type="short sequence motif" description="'KMSKS' region">
    <location>
        <begin position="621"/>
        <end position="625"/>
    </location>
</feature>
<feature type="binding site" evidence="1">
    <location>
        <position position="624"/>
    </location>
    <ligand>
        <name>ATP</name>
        <dbReference type="ChEBI" id="CHEBI:30616"/>
    </ligand>
</feature>
<organism>
    <name type="scientific">Sulfurisphaera tokodaii (strain DSM 16993 / JCM 10545 / NBRC 100140 / 7)</name>
    <name type="common">Sulfolobus tokodaii</name>
    <dbReference type="NCBI Taxonomy" id="273063"/>
    <lineage>
        <taxon>Archaea</taxon>
        <taxon>Thermoproteota</taxon>
        <taxon>Thermoprotei</taxon>
        <taxon>Sulfolobales</taxon>
        <taxon>Sulfolobaceae</taxon>
        <taxon>Sulfurisphaera</taxon>
    </lineage>
</organism>
<proteinExistence type="inferred from homology"/>
<protein>
    <recommendedName>
        <fullName evidence="1">Leucine--tRNA ligase 2</fullName>
        <ecNumber evidence="1">6.1.1.4</ecNumber>
    </recommendedName>
    <alternativeName>
        <fullName evidence="1">Leucyl-tRNA synthetase 2</fullName>
        <shortName evidence="1">LeuRS 2</shortName>
    </alternativeName>
</protein>
<dbReference type="EC" id="6.1.1.4" evidence="1"/>
<dbReference type="EMBL" id="BA000023">
    <property type="protein sequence ID" value="BAK54586.1"/>
    <property type="status" value="ALT_INIT"/>
    <property type="molecule type" value="Genomic_DNA"/>
</dbReference>
<dbReference type="SMR" id="Q970Z6"/>
<dbReference type="STRING" id="273063.STK_14550"/>
<dbReference type="KEGG" id="sto:STK_14550"/>
<dbReference type="PATRIC" id="fig|273063.9.peg.1660"/>
<dbReference type="eggNOG" id="arCOG00809">
    <property type="taxonomic scope" value="Archaea"/>
</dbReference>
<dbReference type="Proteomes" id="UP000001015">
    <property type="component" value="Chromosome"/>
</dbReference>
<dbReference type="GO" id="GO:0005737">
    <property type="term" value="C:cytoplasm"/>
    <property type="evidence" value="ECO:0007669"/>
    <property type="project" value="UniProtKB-SubCell"/>
</dbReference>
<dbReference type="GO" id="GO:0002161">
    <property type="term" value="F:aminoacyl-tRNA deacylase activity"/>
    <property type="evidence" value="ECO:0007669"/>
    <property type="project" value="InterPro"/>
</dbReference>
<dbReference type="GO" id="GO:0005524">
    <property type="term" value="F:ATP binding"/>
    <property type="evidence" value="ECO:0007669"/>
    <property type="project" value="UniProtKB-UniRule"/>
</dbReference>
<dbReference type="GO" id="GO:0004823">
    <property type="term" value="F:leucine-tRNA ligase activity"/>
    <property type="evidence" value="ECO:0007669"/>
    <property type="project" value="UniProtKB-UniRule"/>
</dbReference>
<dbReference type="GO" id="GO:0006429">
    <property type="term" value="P:leucyl-tRNA aminoacylation"/>
    <property type="evidence" value="ECO:0007669"/>
    <property type="project" value="UniProtKB-UniRule"/>
</dbReference>
<dbReference type="CDD" id="cd07959">
    <property type="entry name" value="Anticodon_Ia_Leu_AEc"/>
    <property type="match status" value="1"/>
</dbReference>
<dbReference type="CDD" id="cd00812">
    <property type="entry name" value="LeuRS_core"/>
    <property type="match status" value="1"/>
</dbReference>
<dbReference type="Gene3D" id="3.30.2320.20">
    <property type="entry name" value="Class I aminoacyl-tRNA synthetases (RS)"/>
    <property type="match status" value="1"/>
</dbReference>
<dbReference type="Gene3D" id="3.40.50.620">
    <property type="entry name" value="HUPs"/>
    <property type="match status" value="1"/>
</dbReference>
<dbReference type="Gene3D" id="1.10.730.10">
    <property type="entry name" value="Isoleucyl-tRNA Synthetase, Domain 1"/>
    <property type="match status" value="1"/>
</dbReference>
<dbReference type="Gene3D" id="1.10.10.720">
    <property type="entry name" value="leucyl-tRNA synthetase"/>
    <property type="match status" value="1"/>
</dbReference>
<dbReference type="Gene3D" id="3.90.740.10">
    <property type="entry name" value="Valyl/Leucyl/Isoleucyl-tRNA synthetase, editing domain"/>
    <property type="match status" value="1"/>
</dbReference>
<dbReference type="HAMAP" id="MF_00049_A">
    <property type="entry name" value="Leu_tRNA_synth_A"/>
    <property type="match status" value="1"/>
</dbReference>
<dbReference type="InterPro" id="IPR002300">
    <property type="entry name" value="aa-tRNA-synth_Ia"/>
</dbReference>
<dbReference type="InterPro" id="IPR020791">
    <property type="entry name" value="Leu-tRNA-lgase_arc"/>
</dbReference>
<dbReference type="InterPro" id="IPR004493">
    <property type="entry name" value="Leu-tRNA-synth_Ia_arc/euk"/>
</dbReference>
<dbReference type="InterPro" id="IPR013155">
    <property type="entry name" value="M/V/L/I-tRNA-synth_anticd-bd"/>
</dbReference>
<dbReference type="InterPro" id="IPR014729">
    <property type="entry name" value="Rossmann-like_a/b/a_fold"/>
</dbReference>
<dbReference type="InterPro" id="IPR009080">
    <property type="entry name" value="tRNAsynth_Ia_anticodon-bd"/>
</dbReference>
<dbReference type="InterPro" id="IPR009008">
    <property type="entry name" value="Val/Leu/Ile-tRNA-synth_edit"/>
</dbReference>
<dbReference type="NCBIfam" id="TIGR00395">
    <property type="entry name" value="leuS_arch"/>
    <property type="match status" value="1"/>
</dbReference>
<dbReference type="NCBIfam" id="NF008957">
    <property type="entry name" value="PRK12300.1"/>
    <property type="match status" value="1"/>
</dbReference>
<dbReference type="PANTHER" id="PTHR45794:SF1">
    <property type="entry name" value="LEUCINE--TRNA LIGASE, CYTOPLASMIC"/>
    <property type="match status" value="1"/>
</dbReference>
<dbReference type="PANTHER" id="PTHR45794">
    <property type="entry name" value="LEUCYL-TRNA SYNTHETASE"/>
    <property type="match status" value="1"/>
</dbReference>
<dbReference type="Pfam" id="PF08264">
    <property type="entry name" value="Anticodon_1"/>
    <property type="match status" value="1"/>
</dbReference>
<dbReference type="Pfam" id="PF00133">
    <property type="entry name" value="tRNA-synt_1"/>
    <property type="match status" value="1"/>
</dbReference>
<dbReference type="SUPFAM" id="SSF47323">
    <property type="entry name" value="Anticodon-binding domain of a subclass of class I aminoacyl-tRNA synthetases"/>
    <property type="match status" value="1"/>
</dbReference>
<dbReference type="SUPFAM" id="SSF52374">
    <property type="entry name" value="Nucleotidylyl transferase"/>
    <property type="match status" value="1"/>
</dbReference>
<dbReference type="SUPFAM" id="SSF50677">
    <property type="entry name" value="ValRS/IleRS/LeuRS editing domain"/>
    <property type="match status" value="1"/>
</dbReference>
<name>SYL2_SULTO</name>
<evidence type="ECO:0000255" key="1">
    <source>
        <dbReference type="HAMAP-Rule" id="MF_00049"/>
    </source>
</evidence>
<evidence type="ECO:0000305" key="2"/>
<gene>
    <name evidence="1" type="primary">leuS2</name>
    <name type="ordered locus">STK_14550</name>
</gene>
<accession>Q970Z6</accession>
<accession>F9VNE0</accession>
<reference key="1">
    <citation type="journal article" date="2001" name="DNA Res.">
        <title>Complete genome sequence of an aerobic thermoacidophilic Crenarchaeon, Sulfolobus tokodaii strain7.</title>
        <authorList>
            <person name="Kawarabayasi Y."/>
            <person name="Hino Y."/>
            <person name="Horikawa H."/>
            <person name="Jin-no K."/>
            <person name="Takahashi M."/>
            <person name="Sekine M."/>
            <person name="Baba S."/>
            <person name="Ankai A."/>
            <person name="Kosugi H."/>
            <person name="Hosoyama A."/>
            <person name="Fukui S."/>
            <person name="Nagai Y."/>
            <person name="Nishijima K."/>
            <person name="Otsuka R."/>
            <person name="Nakazawa H."/>
            <person name="Takamiya M."/>
            <person name="Kato Y."/>
            <person name="Yoshizawa T."/>
            <person name="Tanaka T."/>
            <person name="Kudoh Y."/>
            <person name="Yamazaki J."/>
            <person name="Kushida N."/>
            <person name="Oguchi A."/>
            <person name="Aoki K."/>
            <person name="Masuda S."/>
            <person name="Yanagii M."/>
            <person name="Nishimura M."/>
            <person name="Yamagishi A."/>
            <person name="Oshima T."/>
            <person name="Kikuchi H."/>
        </authorList>
    </citation>
    <scope>NUCLEOTIDE SEQUENCE [LARGE SCALE GENOMIC DNA]</scope>
    <source>
        <strain>DSM 16993 / JCM 10545 / NBRC 100140 / 7</strain>
    </source>
</reference>